<name>RSBV_STAEQ</name>
<protein>
    <recommendedName>
        <fullName>Anti-sigma-B factor antagonist</fullName>
    </recommendedName>
    <alternativeName>
        <fullName>Anti-anti-sigma-B factor</fullName>
    </alternativeName>
</protein>
<feature type="chain" id="PRO_0000194197" description="Anti-sigma-B factor antagonist">
    <location>
        <begin position="1"/>
        <end position="108"/>
    </location>
</feature>
<feature type="domain" description="STAS" evidence="2">
    <location>
        <begin position="3"/>
        <end position="108"/>
    </location>
</feature>
<feature type="modified residue" description="Phosphoserine" evidence="1">
    <location>
        <position position="57"/>
    </location>
</feature>
<keyword id="KW-0597">Phosphoprotein</keyword>
<keyword id="KW-1185">Reference proteome</keyword>
<organism>
    <name type="scientific">Staphylococcus epidermidis (strain ATCC 35984 / DSM 28319 / BCRC 17069 / CCUG 31568 / BM 3577 / RP62A)</name>
    <dbReference type="NCBI Taxonomy" id="176279"/>
    <lineage>
        <taxon>Bacteria</taxon>
        <taxon>Bacillati</taxon>
        <taxon>Bacillota</taxon>
        <taxon>Bacilli</taxon>
        <taxon>Bacillales</taxon>
        <taxon>Staphylococcaceae</taxon>
        <taxon>Staphylococcus</taxon>
    </lineage>
</organism>
<evidence type="ECO:0000250" key="1"/>
<evidence type="ECO:0000255" key="2">
    <source>
        <dbReference type="PROSITE-ProRule" id="PRU00198"/>
    </source>
</evidence>
<evidence type="ECO:0000305" key="3"/>
<comment type="function">
    <text evidence="1">Positive regulator of sigma-B activity. Non-phosphorylated RsbV binds to RsbW, preventing its association with sigma-B. When phosphorylated, releases RsbW, which is then free to complex with and inactivate sigma-B (By similarity).</text>
</comment>
<comment type="PTM">
    <text evidence="1">Phosphorylated by RsbW on a serine residue.</text>
</comment>
<comment type="similarity">
    <text evidence="3">Belongs to the anti-sigma-factor antagonist family.</text>
</comment>
<sequence>MNLNIETITHDDFYEVKVGGELDVYTVPELEEVLVPMRQEGTHDVHVNLANVSYMDSTGLGLFVGTLKALNQNDKNLYILGVSERIGRLFDITGLKDLMHVNEGTEVE</sequence>
<accession>Q5HME9</accession>
<reference key="1">
    <citation type="journal article" date="2005" name="J. Bacteriol.">
        <title>Insights on evolution of virulence and resistance from the complete genome analysis of an early methicillin-resistant Staphylococcus aureus strain and a biofilm-producing methicillin-resistant Staphylococcus epidermidis strain.</title>
        <authorList>
            <person name="Gill S.R."/>
            <person name="Fouts D.E."/>
            <person name="Archer G.L."/>
            <person name="Mongodin E.F."/>
            <person name="DeBoy R.T."/>
            <person name="Ravel J."/>
            <person name="Paulsen I.T."/>
            <person name="Kolonay J.F."/>
            <person name="Brinkac L.M."/>
            <person name="Beanan M.J."/>
            <person name="Dodson R.J."/>
            <person name="Daugherty S.C."/>
            <person name="Madupu R."/>
            <person name="Angiuoli S.V."/>
            <person name="Durkin A.S."/>
            <person name="Haft D.H."/>
            <person name="Vamathevan J.J."/>
            <person name="Khouri H."/>
            <person name="Utterback T.R."/>
            <person name="Lee C."/>
            <person name="Dimitrov G."/>
            <person name="Jiang L."/>
            <person name="Qin H."/>
            <person name="Weidman J."/>
            <person name="Tran K."/>
            <person name="Kang K.H."/>
            <person name="Hance I.R."/>
            <person name="Nelson K.E."/>
            <person name="Fraser C.M."/>
        </authorList>
    </citation>
    <scope>NUCLEOTIDE SEQUENCE [LARGE SCALE GENOMIC DNA]</scope>
    <source>
        <strain>ATCC 35984 / DSM 28319 / BCRC 17069 / CCUG 31568 / BM 3577 / RP62A</strain>
    </source>
</reference>
<gene>
    <name type="primary">rsbV</name>
    <name type="ordered locus">SERP1679</name>
</gene>
<proteinExistence type="inferred from homology"/>
<dbReference type="EMBL" id="CP000029">
    <property type="protein sequence ID" value="AAW55035.1"/>
    <property type="molecule type" value="Genomic_DNA"/>
</dbReference>
<dbReference type="RefSeq" id="WP_001829952.1">
    <property type="nucleotide sequence ID" value="NC_002976.3"/>
</dbReference>
<dbReference type="SMR" id="Q5HME9"/>
<dbReference type="STRING" id="176279.SERP1679"/>
<dbReference type="KEGG" id="ser:SERP1679"/>
<dbReference type="eggNOG" id="COG1366">
    <property type="taxonomic scope" value="Bacteria"/>
</dbReference>
<dbReference type="HOGENOM" id="CLU_115403_9_3_9"/>
<dbReference type="Proteomes" id="UP000000531">
    <property type="component" value="Chromosome"/>
</dbReference>
<dbReference type="GO" id="GO:0043856">
    <property type="term" value="F:anti-sigma factor antagonist activity"/>
    <property type="evidence" value="ECO:0007669"/>
    <property type="project" value="InterPro"/>
</dbReference>
<dbReference type="CDD" id="cd07043">
    <property type="entry name" value="STAS_anti-anti-sigma_factors"/>
    <property type="match status" value="1"/>
</dbReference>
<dbReference type="FunFam" id="3.30.750.24:FF:000001">
    <property type="entry name" value="Anti-sigma factor antagonist"/>
    <property type="match status" value="1"/>
</dbReference>
<dbReference type="Gene3D" id="3.30.750.24">
    <property type="entry name" value="STAS domain"/>
    <property type="match status" value="1"/>
</dbReference>
<dbReference type="InterPro" id="IPR003658">
    <property type="entry name" value="Anti-sigma_ant"/>
</dbReference>
<dbReference type="InterPro" id="IPR002645">
    <property type="entry name" value="STAS_dom"/>
</dbReference>
<dbReference type="InterPro" id="IPR036513">
    <property type="entry name" value="STAS_dom_sf"/>
</dbReference>
<dbReference type="NCBIfam" id="TIGR00377">
    <property type="entry name" value="ant_ant_sig"/>
    <property type="match status" value="1"/>
</dbReference>
<dbReference type="PANTHER" id="PTHR33495">
    <property type="entry name" value="ANTI-SIGMA FACTOR ANTAGONIST TM_1081-RELATED-RELATED"/>
    <property type="match status" value="1"/>
</dbReference>
<dbReference type="PANTHER" id="PTHR33495:SF9">
    <property type="entry name" value="ANTI-SIGMA-B FACTOR ANTAGONIST"/>
    <property type="match status" value="1"/>
</dbReference>
<dbReference type="Pfam" id="PF01740">
    <property type="entry name" value="STAS"/>
    <property type="match status" value="1"/>
</dbReference>
<dbReference type="SUPFAM" id="SSF52091">
    <property type="entry name" value="SpoIIaa-like"/>
    <property type="match status" value="1"/>
</dbReference>
<dbReference type="PROSITE" id="PS50801">
    <property type="entry name" value="STAS"/>
    <property type="match status" value="1"/>
</dbReference>